<feature type="chain" id="PRO_1000053957" description="Uridylate kinase">
    <location>
        <begin position="1"/>
        <end position="225"/>
    </location>
</feature>
<feature type="binding site" evidence="1">
    <location>
        <begin position="9"/>
        <end position="10"/>
    </location>
    <ligand>
        <name>ATP</name>
        <dbReference type="ChEBI" id="CHEBI:30616"/>
    </ligand>
</feature>
<feature type="binding site" evidence="1">
    <location>
        <position position="43"/>
    </location>
    <ligand>
        <name>UMP</name>
        <dbReference type="ChEBI" id="CHEBI:57865"/>
    </ligand>
</feature>
<feature type="binding site" evidence="1">
    <location>
        <position position="44"/>
    </location>
    <ligand>
        <name>ATP</name>
        <dbReference type="ChEBI" id="CHEBI:30616"/>
    </ligand>
</feature>
<feature type="binding site" evidence="1">
    <location>
        <position position="48"/>
    </location>
    <ligand>
        <name>ATP</name>
        <dbReference type="ChEBI" id="CHEBI:30616"/>
    </ligand>
</feature>
<feature type="binding site" evidence="1">
    <location>
        <position position="65"/>
    </location>
    <ligand>
        <name>UMP</name>
        <dbReference type="ChEBI" id="CHEBI:57865"/>
    </ligand>
</feature>
<feature type="binding site" evidence="1">
    <location>
        <begin position="113"/>
        <end position="119"/>
    </location>
    <ligand>
        <name>UMP</name>
        <dbReference type="ChEBI" id="CHEBI:57865"/>
    </ligand>
</feature>
<feature type="binding site" evidence="1">
    <location>
        <position position="139"/>
    </location>
    <ligand>
        <name>ATP</name>
        <dbReference type="ChEBI" id="CHEBI:30616"/>
    </ligand>
</feature>
<feature type="binding site" evidence="1">
    <location>
        <position position="145"/>
    </location>
    <ligand>
        <name>ATP</name>
        <dbReference type="ChEBI" id="CHEBI:30616"/>
    </ligand>
</feature>
<feature type="binding site" evidence="1">
    <location>
        <position position="148"/>
    </location>
    <ligand>
        <name>ATP</name>
        <dbReference type="ChEBI" id="CHEBI:30616"/>
    </ligand>
</feature>
<name>PYRH_METS3</name>
<keyword id="KW-0067">ATP-binding</keyword>
<keyword id="KW-0963">Cytoplasm</keyword>
<keyword id="KW-0418">Kinase</keyword>
<keyword id="KW-0547">Nucleotide-binding</keyword>
<keyword id="KW-0665">Pyrimidine biosynthesis</keyword>
<keyword id="KW-0808">Transferase</keyword>
<organism>
    <name type="scientific">Methanobrevibacter smithii (strain ATCC 35061 / DSM 861 / OCM 144 / PS)</name>
    <dbReference type="NCBI Taxonomy" id="420247"/>
    <lineage>
        <taxon>Archaea</taxon>
        <taxon>Methanobacteriati</taxon>
        <taxon>Methanobacteriota</taxon>
        <taxon>Methanomada group</taxon>
        <taxon>Methanobacteria</taxon>
        <taxon>Methanobacteriales</taxon>
        <taxon>Methanobacteriaceae</taxon>
        <taxon>Methanobrevibacter</taxon>
    </lineage>
</organism>
<reference key="1">
    <citation type="journal article" date="2007" name="Proc. Natl. Acad. Sci. U.S.A.">
        <title>Genomic and metabolic adaptations of Methanobrevibacter smithii to the human gut.</title>
        <authorList>
            <person name="Samuel B.S."/>
            <person name="Hansen E.E."/>
            <person name="Manchester J.K."/>
            <person name="Coutinho P.M."/>
            <person name="Henrissat B."/>
            <person name="Fulton R."/>
            <person name="Latreille P."/>
            <person name="Kim K."/>
            <person name="Wilson R.K."/>
            <person name="Gordon J.I."/>
        </authorList>
    </citation>
    <scope>NUCLEOTIDE SEQUENCE [LARGE SCALE GENOMIC DNA]</scope>
    <source>
        <strain>ATCC 35061 / DSM 861 / OCM 144 / PS</strain>
    </source>
</reference>
<gene>
    <name evidence="1" type="primary">pyrH</name>
    <name type="ordered locus">Msm_0415</name>
</gene>
<protein>
    <recommendedName>
        <fullName evidence="1">Uridylate kinase</fullName>
        <shortName evidence="1">UK</shortName>
        <ecNumber evidence="1">2.7.4.22</ecNumber>
    </recommendedName>
    <alternativeName>
        <fullName evidence="1">Uridine monophosphate kinase</fullName>
        <shortName evidence="1">UMP kinase</shortName>
        <shortName evidence="1">UMPK</shortName>
    </alternativeName>
</protein>
<comment type="function">
    <text evidence="1">Catalyzes the reversible phosphorylation of UMP to UDP.</text>
</comment>
<comment type="catalytic activity">
    <reaction evidence="1">
        <text>UMP + ATP = UDP + ADP</text>
        <dbReference type="Rhea" id="RHEA:24400"/>
        <dbReference type="ChEBI" id="CHEBI:30616"/>
        <dbReference type="ChEBI" id="CHEBI:57865"/>
        <dbReference type="ChEBI" id="CHEBI:58223"/>
        <dbReference type="ChEBI" id="CHEBI:456216"/>
        <dbReference type="EC" id="2.7.4.22"/>
    </reaction>
</comment>
<comment type="activity regulation">
    <text evidence="1">Inhibited by UTP.</text>
</comment>
<comment type="pathway">
    <text evidence="1">Pyrimidine metabolism; CTP biosynthesis via de novo pathway; UDP from UMP (UMPK route): step 1/1.</text>
</comment>
<comment type="subunit">
    <text evidence="1">Homohexamer.</text>
</comment>
<comment type="subcellular location">
    <subcellularLocation>
        <location evidence="1">Cytoplasm</location>
    </subcellularLocation>
</comment>
<comment type="similarity">
    <text evidence="1">Belongs to the UMP kinase family.</text>
</comment>
<evidence type="ECO:0000255" key="1">
    <source>
        <dbReference type="HAMAP-Rule" id="MF_01220"/>
    </source>
</evidence>
<accession>A5UK92</accession>
<dbReference type="EC" id="2.7.4.22" evidence="1"/>
<dbReference type="EMBL" id="CP000678">
    <property type="protein sequence ID" value="ABQ86620.1"/>
    <property type="molecule type" value="Genomic_DNA"/>
</dbReference>
<dbReference type="RefSeq" id="WP_004032165.1">
    <property type="nucleotide sequence ID" value="NZ_CP117965.1"/>
</dbReference>
<dbReference type="SMR" id="A5UK92"/>
<dbReference type="STRING" id="420247.Msm_0415"/>
<dbReference type="EnsemblBacteria" id="ABQ86620">
    <property type="protein sequence ID" value="ABQ86620"/>
    <property type="gene ID" value="Msm_0415"/>
</dbReference>
<dbReference type="GeneID" id="78817043"/>
<dbReference type="KEGG" id="msi:Msm_0415"/>
<dbReference type="PATRIC" id="fig|420247.28.peg.418"/>
<dbReference type="eggNOG" id="arCOG00858">
    <property type="taxonomic scope" value="Archaea"/>
</dbReference>
<dbReference type="HOGENOM" id="CLU_079546_0_0_2"/>
<dbReference type="UniPathway" id="UPA00159">
    <property type="reaction ID" value="UER00275"/>
</dbReference>
<dbReference type="Proteomes" id="UP000001992">
    <property type="component" value="Chromosome"/>
</dbReference>
<dbReference type="GO" id="GO:0005737">
    <property type="term" value="C:cytoplasm"/>
    <property type="evidence" value="ECO:0007669"/>
    <property type="project" value="UniProtKB-SubCell"/>
</dbReference>
<dbReference type="GO" id="GO:0005524">
    <property type="term" value="F:ATP binding"/>
    <property type="evidence" value="ECO:0007669"/>
    <property type="project" value="UniProtKB-KW"/>
</dbReference>
<dbReference type="GO" id="GO:0033862">
    <property type="term" value="F:UMP kinase activity"/>
    <property type="evidence" value="ECO:0007669"/>
    <property type="project" value="UniProtKB-EC"/>
</dbReference>
<dbReference type="GO" id="GO:0044210">
    <property type="term" value="P:'de novo' CTP biosynthetic process"/>
    <property type="evidence" value="ECO:0007669"/>
    <property type="project" value="UniProtKB-UniRule"/>
</dbReference>
<dbReference type="GO" id="GO:0006225">
    <property type="term" value="P:UDP biosynthetic process"/>
    <property type="evidence" value="ECO:0007669"/>
    <property type="project" value="TreeGrafter"/>
</dbReference>
<dbReference type="CDD" id="cd04253">
    <property type="entry name" value="AAK_UMPK-PyrH-Pf"/>
    <property type="match status" value="1"/>
</dbReference>
<dbReference type="Gene3D" id="3.40.1160.10">
    <property type="entry name" value="Acetylglutamate kinase-like"/>
    <property type="match status" value="1"/>
</dbReference>
<dbReference type="HAMAP" id="MF_01220_A">
    <property type="entry name" value="PyrH_A"/>
    <property type="match status" value="1"/>
</dbReference>
<dbReference type="InterPro" id="IPR036393">
    <property type="entry name" value="AceGlu_kinase-like_sf"/>
</dbReference>
<dbReference type="InterPro" id="IPR001048">
    <property type="entry name" value="Asp/Glu/Uridylate_kinase"/>
</dbReference>
<dbReference type="InterPro" id="IPR011817">
    <property type="entry name" value="Uridylate_kinase"/>
</dbReference>
<dbReference type="InterPro" id="IPR011818">
    <property type="entry name" value="Uridylate_kinase_arch/spir"/>
</dbReference>
<dbReference type="NCBIfam" id="TIGR02076">
    <property type="entry name" value="pyrH_arch"/>
    <property type="match status" value="1"/>
</dbReference>
<dbReference type="PANTHER" id="PTHR42833">
    <property type="entry name" value="URIDYLATE KINASE"/>
    <property type="match status" value="1"/>
</dbReference>
<dbReference type="PANTHER" id="PTHR42833:SF4">
    <property type="entry name" value="URIDYLATE KINASE PUMPKIN, CHLOROPLASTIC"/>
    <property type="match status" value="1"/>
</dbReference>
<dbReference type="Pfam" id="PF00696">
    <property type="entry name" value="AA_kinase"/>
    <property type="match status" value="1"/>
</dbReference>
<dbReference type="PIRSF" id="PIRSF005650">
    <property type="entry name" value="Uridylate_kin"/>
    <property type="match status" value="1"/>
</dbReference>
<dbReference type="SUPFAM" id="SSF53633">
    <property type="entry name" value="Carbamate kinase-like"/>
    <property type="match status" value="1"/>
</dbReference>
<sequence>MKIVVAIGGSILLKEYDCKKFQEYSEILKSLASEHEIFVVVGGGKPAREYIGVVRELGAGEAQCDDIGIEVTRINAKLLLSALGDAAYQKVPHNFQEALEYSATGKIIVMGGTEPAHSTDAVSAILAEYIHADKLINLTSVDGMYDKDPNKYEDAKLIKEITASEMIEFISGKDTKAGTYEFFDMTAIQMIKRSSLETVIANGYDSENLIKAINGEEVGTKVISK</sequence>
<proteinExistence type="inferred from homology"/>